<dbReference type="EMBL" id="CP000880">
    <property type="protein sequence ID" value="ABX21938.1"/>
    <property type="molecule type" value="Genomic_DNA"/>
</dbReference>
<dbReference type="SMR" id="A9MIN5"/>
<dbReference type="STRING" id="41514.SARI_02060"/>
<dbReference type="KEGG" id="ses:SARI_02060"/>
<dbReference type="HOGENOM" id="CLU_035023_2_2_6"/>
<dbReference type="Proteomes" id="UP000002084">
    <property type="component" value="Chromosome"/>
</dbReference>
<dbReference type="GO" id="GO:0005886">
    <property type="term" value="C:plasma membrane"/>
    <property type="evidence" value="ECO:0007669"/>
    <property type="project" value="UniProtKB-SubCell"/>
</dbReference>
<dbReference type="GO" id="GO:0008324">
    <property type="term" value="F:monoatomic cation transmembrane transporter activity"/>
    <property type="evidence" value="ECO:0007669"/>
    <property type="project" value="InterPro"/>
</dbReference>
<dbReference type="GO" id="GO:0006813">
    <property type="term" value="P:potassium ion transport"/>
    <property type="evidence" value="ECO:0007669"/>
    <property type="project" value="InterPro"/>
</dbReference>
<dbReference type="FunFam" id="3.30.70.1450:FF:000003">
    <property type="entry name" value="Putative transport protein YbjL"/>
    <property type="match status" value="1"/>
</dbReference>
<dbReference type="Gene3D" id="3.30.70.1450">
    <property type="entry name" value="Regulator of K+ conductance, C-terminal domain"/>
    <property type="match status" value="1"/>
</dbReference>
<dbReference type="HAMAP" id="MF_01015">
    <property type="entry name" value="YbjL"/>
    <property type="match status" value="1"/>
</dbReference>
<dbReference type="InterPro" id="IPR050144">
    <property type="entry name" value="AAE_transporter"/>
</dbReference>
<dbReference type="InterPro" id="IPR006037">
    <property type="entry name" value="RCK_C"/>
</dbReference>
<dbReference type="InterPro" id="IPR036721">
    <property type="entry name" value="RCK_C_sf"/>
</dbReference>
<dbReference type="InterPro" id="IPR023017">
    <property type="entry name" value="Transp_YbjL_put"/>
</dbReference>
<dbReference type="InterPro" id="IPR006512">
    <property type="entry name" value="YidE_YbjL"/>
</dbReference>
<dbReference type="NCBIfam" id="NF003440">
    <property type="entry name" value="PRK04972.1"/>
    <property type="match status" value="1"/>
</dbReference>
<dbReference type="NCBIfam" id="TIGR01625">
    <property type="entry name" value="YidE_YbjL_dupl"/>
    <property type="match status" value="2"/>
</dbReference>
<dbReference type="PANTHER" id="PTHR30445">
    <property type="entry name" value="K(+)_H(+) ANTIPORTER SUBUNIT KHTT"/>
    <property type="match status" value="1"/>
</dbReference>
<dbReference type="PANTHER" id="PTHR30445:SF10">
    <property type="entry name" value="TRANSPORT PROTEIN YBJL-RELATED"/>
    <property type="match status" value="1"/>
</dbReference>
<dbReference type="Pfam" id="PF06826">
    <property type="entry name" value="Asp-Al_Ex"/>
    <property type="match status" value="2"/>
</dbReference>
<dbReference type="Pfam" id="PF02080">
    <property type="entry name" value="TrkA_C"/>
    <property type="match status" value="2"/>
</dbReference>
<dbReference type="SUPFAM" id="SSF116726">
    <property type="entry name" value="TrkA C-terminal domain-like"/>
    <property type="match status" value="2"/>
</dbReference>
<dbReference type="PROSITE" id="PS51202">
    <property type="entry name" value="RCK_C"/>
    <property type="match status" value="2"/>
</dbReference>
<feature type="chain" id="PRO_1000084121" description="Putative transport protein YbjL">
    <location>
        <begin position="1"/>
        <end position="561"/>
    </location>
</feature>
<feature type="transmembrane region" description="Helical" evidence="1">
    <location>
        <begin position="8"/>
        <end position="28"/>
    </location>
</feature>
<feature type="transmembrane region" description="Helical" evidence="1">
    <location>
        <begin position="32"/>
        <end position="52"/>
    </location>
</feature>
<feature type="transmembrane region" description="Helical" evidence="1">
    <location>
        <begin position="66"/>
        <end position="86"/>
    </location>
</feature>
<feature type="transmembrane region" description="Helical" evidence="1">
    <location>
        <begin position="94"/>
        <end position="114"/>
    </location>
</feature>
<feature type="transmembrane region" description="Helical" evidence="1">
    <location>
        <begin position="158"/>
        <end position="178"/>
    </location>
</feature>
<feature type="transmembrane region" description="Helical" evidence="1">
    <location>
        <begin position="383"/>
        <end position="403"/>
    </location>
</feature>
<feature type="transmembrane region" description="Helical" evidence="1">
    <location>
        <begin position="406"/>
        <end position="426"/>
    </location>
</feature>
<feature type="transmembrane region" description="Helical" evidence="1">
    <location>
        <begin position="447"/>
        <end position="467"/>
    </location>
</feature>
<feature type="transmembrane region" description="Helical" evidence="1">
    <location>
        <begin position="475"/>
        <end position="495"/>
    </location>
</feature>
<feature type="transmembrane region" description="Helical" evidence="1">
    <location>
        <begin position="540"/>
        <end position="560"/>
    </location>
</feature>
<feature type="domain" description="RCK C-terminal 1" evidence="1">
    <location>
        <begin position="200"/>
        <end position="288"/>
    </location>
</feature>
<feature type="domain" description="RCK C-terminal 2" evidence="1">
    <location>
        <begin position="292"/>
        <end position="373"/>
    </location>
</feature>
<name>YBJL_SALAR</name>
<keyword id="KW-1003">Cell membrane</keyword>
<keyword id="KW-0472">Membrane</keyword>
<keyword id="KW-1185">Reference proteome</keyword>
<keyword id="KW-0677">Repeat</keyword>
<keyword id="KW-0812">Transmembrane</keyword>
<keyword id="KW-1133">Transmembrane helix</keyword>
<keyword id="KW-0813">Transport</keyword>
<gene>
    <name evidence="1" type="primary">ybjL</name>
    <name type="ordered locus">SARI_02060</name>
</gene>
<sequence length="561" mass="60167">MNINVADLLNGNYILLLFVVLALGLCLGKLRLGSIQLGNSIGVLVVSLLLGQQHFSINTDALNLGFMLFIFCVGVEAGPNFFSIFFRDGKNYLMLALVMVGSALLIALGLGKLFGWDIGLTAGMLAGSMTSTPVLVGAGDTLRHSGIASTQLSSALDNLSLGYALTYLIGLVSLIVGARYLPKLQHQDLQTSAQQIARERGLDTDANRKVYLPVIRAYRVGPELVAWTDGKNLRELGIYRQTGCYIERIRRNGILANPDGDAVLQMGDEIALVGYPDAHARLDPSFRNGKEVFDRDLLDMRIVTEEIVVKNHNAVGRRLAQLKLTDHGCFLNRVIRSQIEMPIDDNVVLNKGDVLQVSGDARRVKTIADRIGFISIHSQVTDLLAFCAFFIIGLMIGMITFQFSNFSFGIGNAAGLLFAGIMLGFLRANHPTFGYIPQGALNMVKEFGLMVFMAGVGLSAGSGISNGLGAVGGQMLIAGLVVSLAPVVICFLFGAYVLRMNRALLFGAMMGARTCAPAMEIISDTARSNIPALGYAGTYAIANVLLTLAGTLIVIIWPGLG</sequence>
<organism>
    <name type="scientific">Salmonella arizonae (strain ATCC BAA-731 / CDC346-86 / RSK2980)</name>
    <dbReference type="NCBI Taxonomy" id="41514"/>
    <lineage>
        <taxon>Bacteria</taxon>
        <taxon>Pseudomonadati</taxon>
        <taxon>Pseudomonadota</taxon>
        <taxon>Gammaproteobacteria</taxon>
        <taxon>Enterobacterales</taxon>
        <taxon>Enterobacteriaceae</taxon>
        <taxon>Salmonella</taxon>
    </lineage>
</organism>
<evidence type="ECO:0000255" key="1">
    <source>
        <dbReference type="HAMAP-Rule" id="MF_01015"/>
    </source>
</evidence>
<accession>A9MIN5</accession>
<reference key="1">
    <citation type="submission" date="2007-11" db="EMBL/GenBank/DDBJ databases">
        <authorList>
            <consortium name="The Salmonella enterica serovar Arizonae Genome Sequencing Project"/>
            <person name="McClelland M."/>
            <person name="Sanderson E.K."/>
            <person name="Porwollik S."/>
            <person name="Spieth J."/>
            <person name="Clifton W.S."/>
            <person name="Fulton R."/>
            <person name="Chunyan W."/>
            <person name="Wollam A."/>
            <person name="Shah N."/>
            <person name="Pepin K."/>
            <person name="Bhonagiri V."/>
            <person name="Nash W."/>
            <person name="Johnson M."/>
            <person name="Thiruvilangam P."/>
            <person name="Wilson R."/>
        </authorList>
    </citation>
    <scope>NUCLEOTIDE SEQUENCE [LARGE SCALE GENOMIC DNA]</scope>
    <source>
        <strain>ATCC BAA-731 / CDC346-86 / RSK2980</strain>
    </source>
</reference>
<proteinExistence type="inferred from homology"/>
<comment type="subcellular location">
    <subcellularLocation>
        <location evidence="1">Cell membrane</location>
        <topology evidence="1">Multi-pass membrane protein</topology>
    </subcellularLocation>
</comment>
<comment type="similarity">
    <text evidence="1">Belongs to the AAE transporter (TC 2.A.81) family. YbjL subfamily.</text>
</comment>
<protein>
    <recommendedName>
        <fullName evidence="1">Putative transport protein YbjL</fullName>
    </recommendedName>
</protein>